<dbReference type="EC" id="6.1.1.9" evidence="1"/>
<dbReference type="EMBL" id="AL157959">
    <property type="protein sequence ID" value="CAM07413.1"/>
    <property type="molecule type" value="Genomic_DNA"/>
</dbReference>
<dbReference type="PIR" id="E82001">
    <property type="entry name" value="E82001"/>
</dbReference>
<dbReference type="RefSeq" id="WP_002245792.1">
    <property type="nucleotide sequence ID" value="NC_003116.1"/>
</dbReference>
<dbReference type="SMR" id="Q9JX22"/>
<dbReference type="EnsemblBacteria" id="CAM07413">
    <property type="protein sequence ID" value="CAM07413"/>
    <property type="gene ID" value="NMA0094"/>
</dbReference>
<dbReference type="KEGG" id="nma:NMA0094"/>
<dbReference type="HOGENOM" id="CLU_001493_0_2_4"/>
<dbReference type="Proteomes" id="UP000000626">
    <property type="component" value="Chromosome"/>
</dbReference>
<dbReference type="GO" id="GO:0005829">
    <property type="term" value="C:cytosol"/>
    <property type="evidence" value="ECO:0007669"/>
    <property type="project" value="TreeGrafter"/>
</dbReference>
<dbReference type="GO" id="GO:0002161">
    <property type="term" value="F:aminoacyl-tRNA deacylase activity"/>
    <property type="evidence" value="ECO:0007669"/>
    <property type="project" value="InterPro"/>
</dbReference>
<dbReference type="GO" id="GO:0005524">
    <property type="term" value="F:ATP binding"/>
    <property type="evidence" value="ECO:0007669"/>
    <property type="project" value="UniProtKB-UniRule"/>
</dbReference>
<dbReference type="GO" id="GO:0004832">
    <property type="term" value="F:valine-tRNA ligase activity"/>
    <property type="evidence" value="ECO:0007669"/>
    <property type="project" value="UniProtKB-UniRule"/>
</dbReference>
<dbReference type="GO" id="GO:0006438">
    <property type="term" value="P:valyl-tRNA aminoacylation"/>
    <property type="evidence" value="ECO:0007669"/>
    <property type="project" value="UniProtKB-UniRule"/>
</dbReference>
<dbReference type="CDD" id="cd07962">
    <property type="entry name" value="Anticodon_Ia_Val"/>
    <property type="match status" value="1"/>
</dbReference>
<dbReference type="CDD" id="cd00817">
    <property type="entry name" value="ValRS_core"/>
    <property type="match status" value="1"/>
</dbReference>
<dbReference type="FunFam" id="1.10.287.380:FF:000001">
    <property type="entry name" value="Valine--tRNA ligase"/>
    <property type="match status" value="1"/>
</dbReference>
<dbReference type="FunFam" id="1.10.730.10:FF:000009">
    <property type="entry name" value="Valine--tRNA ligase, mitochondrial"/>
    <property type="match status" value="1"/>
</dbReference>
<dbReference type="FunFam" id="3.40.50.620:FF:000020">
    <property type="entry name" value="Valine--tRNA ligase, mitochondrial"/>
    <property type="match status" value="1"/>
</dbReference>
<dbReference type="FunFam" id="3.40.50.620:FF:000078">
    <property type="entry name" value="Valine--tRNA ligase, mitochondrial"/>
    <property type="match status" value="1"/>
</dbReference>
<dbReference type="Gene3D" id="3.40.50.620">
    <property type="entry name" value="HUPs"/>
    <property type="match status" value="2"/>
</dbReference>
<dbReference type="Gene3D" id="1.10.730.10">
    <property type="entry name" value="Isoleucyl-tRNA Synthetase, Domain 1"/>
    <property type="match status" value="1"/>
</dbReference>
<dbReference type="Gene3D" id="1.10.287.380">
    <property type="entry name" value="Valyl-tRNA synthetase, C-terminal domain"/>
    <property type="match status" value="1"/>
</dbReference>
<dbReference type="HAMAP" id="MF_02004">
    <property type="entry name" value="Val_tRNA_synth_type1"/>
    <property type="match status" value="1"/>
</dbReference>
<dbReference type="InterPro" id="IPR001412">
    <property type="entry name" value="aa-tRNA-synth_I_CS"/>
</dbReference>
<dbReference type="InterPro" id="IPR002300">
    <property type="entry name" value="aa-tRNA-synth_Ia"/>
</dbReference>
<dbReference type="InterPro" id="IPR033705">
    <property type="entry name" value="Anticodon_Ia_Val"/>
</dbReference>
<dbReference type="InterPro" id="IPR013155">
    <property type="entry name" value="M/V/L/I-tRNA-synth_anticd-bd"/>
</dbReference>
<dbReference type="InterPro" id="IPR014729">
    <property type="entry name" value="Rossmann-like_a/b/a_fold"/>
</dbReference>
<dbReference type="InterPro" id="IPR010978">
    <property type="entry name" value="tRNA-bd_arm"/>
</dbReference>
<dbReference type="InterPro" id="IPR009080">
    <property type="entry name" value="tRNAsynth_Ia_anticodon-bd"/>
</dbReference>
<dbReference type="InterPro" id="IPR037118">
    <property type="entry name" value="Val-tRNA_synth_C_sf"/>
</dbReference>
<dbReference type="InterPro" id="IPR019499">
    <property type="entry name" value="Val-tRNA_synth_tRNA-bd"/>
</dbReference>
<dbReference type="InterPro" id="IPR009008">
    <property type="entry name" value="Val/Leu/Ile-tRNA-synth_edit"/>
</dbReference>
<dbReference type="InterPro" id="IPR002303">
    <property type="entry name" value="Valyl-tRNA_ligase"/>
</dbReference>
<dbReference type="NCBIfam" id="NF004349">
    <property type="entry name" value="PRK05729.1"/>
    <property type="match status" value="1"/>
</dbReference>
<dbReference type="NCBIfam" id="TIGR00422">
    <property type="entry name" value="valS"/>
    <property type="match status" value="1"/>
</dbReference>
<dbReference type="PANTHER" id="PTHR11946:SF93">
    <property type="entry name" value="VALINE--TRNA LIGASE, CHLOROPLASTIC_MITOCHONDRIAL 2"/>
    <property type="match status" value="1"/>
</dbReference>
<dbReference type="PANTHER" id="PTHR11946">
    <property type="entry name" value="VALYL-TRNA SYNTHETASES"/>
    <property type="match status" value="1"/>
</dbReference>
<dbReference type="Pfam" id="PF08264">
    <property type="entry name" value="Anticodon_1"/>
    <property type="match status" value="1"/>
</dbReference>
<dbReference type="Pfam" id="PF00133">
    <property type="entry name" value="tRNA-synt_1"/>
    <property type="match status" value="1"/>
</dbReference>
<dbReference type="Pfam" id="PF10458">
    <property type="entry name" value="Val_tRNA-synt_C"/>
    <property type="match status" value="1"/>
</dbReference>
<dbReference type="PRINTS" id="PR00986">
    <property type="entry name" value="TRNASYNTHVAL"/>
</dbReference>
<dbReference type="SUPFAM" id="SSF47323">
    <property type="entry name" value="Anticodon-binding domain of a subclass of class I aminoacyl-tRNA synthetases"/>
    <property type="match status" value="1"/>
</dbReference>
<dbReference type="SUPFAM" id="SSF52374">
    <property type="entry name" value="Nucleotidylyl transferase"/>
    <property type="match status" value="1"/>
</dbReference>
<dbReference type="SUPFAM" id="SSF46589">
    <property type="entry name" value="tRNA-binding arm"/>
    <property type="match status" value="1"/>
</dbReference>
<dbReference type="SUPFAM" id="SSF50677">
    <property type="entry name" value="ValRS/IleRS/LeuRS editing domain"/>
    <property type="match status" value="1"/>
</dbReference>
<dbReference type="PROSITE" id="PS00178">
    <property type="entry name" value="AA_TRNA_LIGASE_I"/>
    <property type="match status" value="1"/>
</dbReference>
<comment type="function">
    <text evidence="1">Catalyzes the attachment of valine to tRNA(Val). As ValRS can inadvertently accommodate and process structurally similar amino acids such as threonine, to avoid such errors, it has a 'posttransfer' editing activity that hydrolyzes mischarged Thr-tRNA(Val) in a tRNA-dependent manner.</text>
</comment>
<comment type="catalytic activity">
    <reaction evidence="1">
        <text>tRNA(Val) + L-valine + ATP = L-valyl-tRNA(Val) + AMP + diphosphate</text>
        <dbReference type="Rhea" id="RHEA:10704"/>
        <dbReference type="Rhea" id="RHEA-COMP:9672"/>
        <dbReference type="Rhea" id="RHEA-COMP:9708"/>
        <dbReference type="ChEBI" id="CHEBI:30616"/>
        <dbReference type="ChEBI" id="CHEBI:33019"/>
        <dbReference type="ChEBI" id="CHEBI:57762"/>
        <dbReference type="ChEBI" id="CHEBI:78442"/>
        <dbReference type="ChEBI" id="CHEBI:78537"/>
        <dbReference type="ChEBI" id="CHEBI:456215"/>
        <dbReference type="EC" id="6.1.1.9"/>
    </reaction>
</comment>
<comment type="subunit">
    <text evidence="1">Monomer.</text>
</comment>
<comment type="subcellular location">
    <subcellularLocation>
        <location evidence="1">Cytoplasm</location>
    </subcellularLocation>
</comment>
<comment type="domain">
    <text evidence="1">ValRS has two distinct active sites: one for aminoacylation and one for editing. The misactivated threonine is translocated from the active site to the editing site.</text>
</comment>
<comment type="domain">
    <text evidence="1">The C-terminal coiled-coil domain is crucial for aminoacylation activity.</text>
</comment>
<comment type="similarity">
    <text evidence="1">Belongs to the class-I aminoacyl-tRNA synthetase family. ValS type 1 subfamily.</text>
</comment>
<protein>
    <recommendedName>
        <fullName evidence="1">Valine--tRNA ligase</fullName>
        <ecNumber evidence="1">6.1.1.9</ecNumber>
    </recommendedName>
    <alternativeName>
        <fullName evidence="1">Valyl-tRNA synthetase</fullName>
        <shortName evidence="1">ValRS</shortName>
    </alternativeName>
</protein>
<reference key="1">
    <citation type="journal article" date="2000" name="Nature">
        <title>Complete DNA sequence of a serogroup A strain of Neisseria meningitidis Z2491.</title>
        <authorList>
            <person name="Parkhill J."/>
            <person name="Achtman M."/>
            <person name="James K.D."/>
            <person name="Bentley S.D."/>
            <person name="Churcher C.M."/>
            <person name="Klee S.R."/>
            <person name="Morelli G."/>
            <person name="Basham D."/>
            <person name="Brown D."/>
            <person name="Chillingworth T."/>
            <person name="Davies R.M."/>
            <person name="Davis P."/>
            <person name="Devlin K."/>
            <person name="Feltwell T."/>
            <person name="Hamlin N."/>
            <person name="Holroyd S."/>
            <person name="Jagels K."/>
            <person name="Leather S."/>
            <person name="Moule S."/>
            <person name="Mungall K.L."/>
            <person name="Quail M.A."/>
            <person name="Rajandream M.A."/>
            <person name="Rutherford K.M."/>
            <person name="Simmonds M."/>
            <person name="Skelton J."/>
            <person name="Whitehead S."/>
            <person name="Spratt B.G."/>
            <person name="Barrell B.G."/>
        </authorList>
    </citation>
    <scope>NUCLEOTIDE SEQUENCE [LARGE SCALE GENOMIC DNA]</scope>
    <source>
        <strain>DSM 15465 / Z2491</strain>
    </source>
</reference>
<accession>Q9JX22</accession>
<accession>A1INV6</accession>
<keyword id="KW-0030">Aminoacyl-tRNA synthetase</keyword>
<keyword id="KW-0067">ATP-binding</keyword>
<keyword id="KW-0175">Coiled coil</keyword>
<keyword id="KW-0963">Cytoplasm</keyword>
<keyword id="KW-0436">Ligase</keyword>
<keyword id="KW-0547">Nucleotide-binding</keyword>
<keyword id="KW-0648">Protein biosynthesis</keyword>
<organism>
    <name type="scientific">Neisseria meningitidis serogroup A / serotype 4A (strain DSM 15465 / Z2491)</name>
    <dbReference type="NCBI Taxonomy" id="122587"/>
    <lineage>
        <taxon>Bacteria</taxon>
        <taxon>Pseudomonadati</taxon>
        <taxon>Pseudomonadota</taxon>
        <taxon>Betaproteobacteria</taxon>
        <taxon>Neisseriales</taxon>
        <taxon>Neisseriaceae</taxon>
        <taxon>Neisseria</taxon>
    </lineage>
</organism>
<feature type="chain" id="PRO_0000106234" description="Valine--tRNA ligase">
    <location>
        <begin position="1"/>
        <end position="945"/>
    </location>
</feature>
<feature type="coiled-coil region" evidence="1">
    <location>
        <begin position="879"/>
        <end position="945"/>
    </location>
</feature>
<feature type="short sequence motif" description="'HIGH' region">
    <location>
        <begin position="42"/>
        <end position="52"/>
    </location>
</feature>
<feature type="short sequence motif" description="'KMSKS' region">
    <location>
        <begin position="552"/>
        <end position="556"/>
    </location>
</feature>
<feature type="binding site" evidence="1">
    <location>
        <position position="555"/>
    </location>
    <ligand>
        <name>ATP</name>
        <dbReference type="ChEBI" id="CHEBI:30616"/>
    </ligand>
</feature>
<proteinExistence type="inferred from homology"/>
<name>SYV_NEIMA</name>
<sequence length="945" mass="106889">MLDKYSPAEIESKHYQNWEEQGYFQPDMDLTKPSFSIQLPPPNVTGTLHMGHAFNQTIMDGLTRYYRMKGCNTAWIPGTDHAGIATQIVVERQLAAQNVSRHDLGREKFLEKVWEWKEVSGGTITQQMRRVGCSADWTREYFTMDDVRAETVTEVFVRLYEQGLIYRGKRLVNWDPVLGTAVSDLEVESVEEQGSMWHIRYPLADNPAEAVIVATTRPETLLGDVAVAVNPEDERYTHLIGKELILPLTGRTIPVIADEYVEKDFGTGCVKITPAHDFNDYEVGKRHDTRLVNVFDLEAKVLANAEVFNFKGEAQPSFALPEKYAGLDRFAARKQMVADLQEQGFLVEIKAHTLMTPKGDRTGSVIEPMLTSQWFVAMSATPNGGEPDSEFKGLSLADKAKKAVDSGAVRFIPENWVNTYNQWMNNIQDWCISRQLWWGHQIPAWYDNEGNVYVARNQEEAEKQAGKTGLTREEDVLDTWFSSALVPFSTLGWPSETDELKAFLPSNVLVTGYEIIFFWVARMIMMTTHFTGKVPFKDVYIHGIVRDHEGKKMSKSEGNVIDPVDLIDGIDLEKLLVKRTTGLRKPETAPKVEEASRKLFPEGIPSMGADALRFTMASYASLGRSVNFDFKRAEGYRNFCNKIWNATNFVLMNTENQDCGYGATATEPRGYSFPDMWIVDRLNQTIEQVTQAYETYRFDLAAETLYSFMWNDYCDWYLELAKVQLQTGCASRQRATRHTLLRVLEAALRLLHPIIPFITEELWQTVAPMCDAKTADSIMLARFPEADSGEIVQTAFEQMTVLQDLIGAVRNLRGEMGIQPNVKAPLFVESTDDLADYLKYLPMMTRLTEAQQVATLPESEDAPVAVCNGARLMLKVEIDKATETARLSKEAEKLQKALDKLNAKLSKPGYTEKAPAHLVEKDKADLAELEDKMAKVQTQLSKLKD</sequence>
<gene>
    <name evidence="1" type="primary">valS</name>
    <name type="ordered locus">NMA0094</name>
</gene>
<evidence type="ECO:0000255" key="1">
    <source>
        <dbReference type="HAMAP-Rule" id="MF_02004"/>
    </source>
</evidence>